<sequence length="196" mass="21525">MLVPTVVEQTSRGERAYDIYSRLLKDRIIMLSGEVNDQMANSVIAQLLFLDAQDSEKDIYLYINSPGGVITSGLAMLDTMNFIKSDVQTIAIGMAASMASVLLAGGTKGKRFALPNSTILIHQPSGGAQGQQTEIEIAAEEILKTRRKMNQILADATGQTIEQIKKDTERDHYMSAQEAKDYGLIDDILVNKNTQK</sequence>
<evidence type="ECO:0000255" key="1">
    <source>
        <dbReference type="HAMAP-Rule" id="MF_00444"/>
    </source>
</evidence>
<keyword id="KW-0963">Cytoplasm</keyword>
<keyword id="KW-0378">Hydrolase</keyword>
<keyword id="KW-0645">Protease</keyword>
<keyword id="KW-0720">Serine protease</keyword>
<accession>B3WCR2</accession>
<gene>
    <name evidence="1" type="primary">clpP</name>
    <name type="ordered locus">LCABL_10770</name>
</gene>
<protein>
    <recommendedName>
        <fullName evidence="1">ATP-dependent Clp protease proteolytic subunit</fullName>
        <ecNumber evidence="1">3.4.21.92</ecNumber>
    </recommendedName>
    <alternativeName>
        <fullName evidence="1">Endopeptidase Clp</fullName>
    </alternativeName>
</protein>
<comment type="function">
    <text evidence="1">Cleaves peptides in various proteins in a process that requires ATP hydrolysis. Has a chymotrypsin-like activity. Plays a major role in the degradation of misfolded proteins.</text>
</comment>
<comment type="catalytic activity">
    <reaction evidence="1">
        <text>Hydrolysis of proteins to small peptides in the presence of ATP and magnesium. alpha-casein is the usual test substrate. In the absence of ATP, only oligopeptides shorter than five residues are hydrolyzed (such as succinyl-Leu-Tyr-|-NHMec, and Leu-Tyr-Leu-|-Tyr-Trp, in which cleavage of the -Tyr-|-Leu- and -Tyr-|-Trp bonds also occurs).</text>
        <dbReference type="EC" id="3.4.21.92"/>
    </reaction>
</comment>
<comment type="subunit">
    <text evidence="1">Fourteen ClpP subunits assemble into 2 heptameric rings which stack back to back to give a disk-like structure with a central cavity, resembling the structure of eukaryotic proteasomes.</text>
</comment>
<comment type="subcellular location">
    <subcellularLocation>
        <location evidence="1">Cytoplasm</location>
    </subcellularLocation>
</comment>
<comment type="similarity">
    <text evidence="1">Belongs to the peptidase S14 family.</text>
</comment>
<organism>
    <name type="scientific">Lacticaseibacillus casei (strain BL23)</name>
    <name type="common">Lactobacillus casei</name>
    <dbReference type="NCBI Taxonomy" id="543734"/>
    <lineage>
        <taxon>Bacteria</taxon>
        <taxon>Bacillati</taxon>
        <taxon>Bacillota</taxon>
        <taxon>Bacilli</taxon>
        <taxon>Lactobacillales</taxon>
        <taxon>Lactobacillaceae</taxon>
        <taxon>Lacticaseibacillus</taxon>
    </lineage>
</organism>
<name>CLPP_LACCB</name>
<dbReference type="EC" id="3.4.21.92" evidence="1"/>
<dbReference type="EMBL" id="FM177140">
    <property type="protein sequence ID" value="CAQ66163.1"/>
    <property type="molecule type" value="Genomic_DNA"/>
</dbReference>
<dbReference type="SMR" id="B3WCR2"/>
<dbReference type="MEROPS" id="S14.001"/>
<dbReference type="KEGG" id="lcb:LCABL_10770"/>
<dbReference type="HOGENOM" id="CLU_058707_3_2_9"/>
<dbReference type="GO" id="GO:0005737">
    <property type="term" value="C:cytoplasm"/>
    <property type="evidence" value="ECO:0007669"/>
    <property type="project" value="UniProtKB-SubCell"/>
</dbReference>
<dbReference type="GO" id="GO:0009368">
    <property type="term" value="C:endopeptidase Clp complex"/>
    <property type="evidence" value="ECO:0007669"/>
    <property type="project" value="TreeGrafter"/>
</dbReference>
<dbReference type="GO" id="GO:0004176">
    <property type="term" value="F:ATP-dependent peptidase activity"/>
    <property type="evidence" value="ECO:0007669"/>
    <property type="project" value="InterPro"/>
</dbReference>
<dbReference type="GO" id="GO:0051117">
    <property type="term" value="F:ATPase binding"/>
    <property type="evidence" value="ECO:0007669"/>
    <property type="project" value="TreeGrafter"/>
</dbReference>
<dbReference type="GO" id="GO:0004252">
    <property type="term" value="F:serine-type endopeptidase activity"/>
    <property type="evidence" value="ECO:0007669"/>
    <property type="project" value="UniProtKB-UniRule"/>
</dbReference>
<dbReference type="GO" id="GO:0006515">
    <property type="term" value="P:protein quality control for misfolded or incompletely synthesized proteins"/>
    <property type="evidence" value="ECO:0007669"/>
    <property type="project" value="TreeGrafter"/>
</dbReference>
<dbReference type="CDD" id="cd07017">
    <property type="entry name" value="S14_ClpP_2"/>
    <property type="match status" value="1"/>
</dbReference>
<dbReference type="FunFam" id="3.90.226.10:FF:000001">
    <property type="entry name" value="ATP-dependent Clp protease proteolytic subunit"/>
    <property type="match status" value="1"/>
</dbReference>
<dbReference type="Gene3D" id="3.90.226.10">
    <property type="entry name" value="2-enoyl-CoA Hydratase, Chain A, domain 1"/>
    <property type="match status" value="1"/>
</dbReference>
<dbReference type="HAMAP" id="MF_00444">
    <property type="entry name" value="ClpP"/>
    <property type="match status" value="1"/>
</dbReference>
<dbReference type="InterPro" id="IPR001907">
    <property type="entry name" value="ClpP"/>
</dbReference>
<dbReference type="InterPro" id="IPR029045">
    <property type="entry name" value="ClpP/crotonase-like_dom_sf"/>
</dbReference>
<dbReference type="InterPro" id="IPR023562">
    <property type="entry name" value="ClpP/TepA"/>
</dbReference>
<dbReference type="InterPro" id="IPR033135">
    <property type="entry name" value="ClpP_His_AS"/>
</dbReference>
<dbReference type="InterPro" id="IPR018215">
    <property type="entry name" value="ClpP_Ser_AS"/>
</dbReference>
<dbReference type="NCBIfam" id="TIGR00493">
    <property type="entry name" value="clpP"/>
    <property type="match status" value="1"/>
</dbReference>
<dbReference type="NCBIfam" id="NF001368">
    <property type="entry name" value="PRK00277.1"/>
    <property type="match status" value="1"/>
</dbReference>
<dbReference type="NCBIfam" id="NF009205">
    <property type="entry name" value="PRK12553.1"/>
    <property type="match status" value="1"/>
</dbReference>
<dbReference type="PANTHER" id="PTHR10381">
    <property type="entry name" value="ATP-DEPENDENT CLP PROTEASE PROTEOLYTIC SUBUNIT"/>
    <property type="match status" value="1"/>
</dbReference>
<dbReference type="PANTHER" id="PTHR10381:SF70">
    <property type="entry name" value="ATP-DEPENDENT CLP PROTEASE PROTEOLYTIC SUBUNIT"/>
    <property type="match status" value="1"/>
</dbReference>
<dbReference type="Pfam" id="PF00574">
    <property type="entry name" value="CLP_protease"/>
    <property type="match status" value="1"/>
</dbReference>
<dbReference type="PRINTS" id="PR00127">
    <property type="entry name" value="CLPPROTEASEP"/>
</dbReference>
<dbReference type="SUPFAM" id="SSF52096">
    <property type="entry name" value="ClpP/crotonase"/>
    <property type="match status" value="1"/>
</dbReference>
<dbReference type="PROSITE" id="PS00382">
    <property type="entry name" value="CLP_PROTEASE_HIS"/>
    <property type="match status" value="1"/>
</dbReference>
<dbReference type="PROSITE" id="PS00381">
    <property type="entry name" value="CLP_PROTEASE_SER"/>
    <property type="match status" value="1"/>
</dbReference>
<proteinExistence type="inferred from homology"/>
<reference key="1">
    <citation type="submission" date="2008-06" db="EMBL/GenBank/DDBJ databases">
        <title>Lactobacillus casei BL23 complete genome sequence.</title>
        <authorList>
            <person name="Maze A."/>
            <person name="Boel G."/>
            <person name="Bourand A."/>
            <person name="Loux V."/>
            <person name="Gibrat J.F."/>
            <person name="Zuniga M."/>
            <person name="Hartke A."/>
            <person name="Deutscher J."/>
        </authorList>
    </citation>
    <scope>NUCLEOTIDE SEQUENCE [LARGE SCALE GENOMIC DNA]</scope>
    <source>
        <strain>BL23</strain>
    </source>
</reference>
<feature type="chain" id="PRO_1000189650" description="ATP-dependent Clp protease proteolytic subunit">
    <location>
        <begin position="1"/>
        <end position="196"/>
    </location>
</feature>
<feature type="active site" description="Nucleophile" evidence="1">
    <location>
        <position position="97"/>
    </location>
</feature>
<feature type="active site" evidence="1">
    <location>
        <position position="122"/>
    </location>
</feature>